<keyword id="KW-1185">Reference proteome</keyword>
<organism>
    <name type="scientific">Mycobacterium bovis (strain ATCC BAA-935 / AF2122/97)</name>
    <dbReference type="NCBI Taxonomy" id="233413"/>
    <lineage>
        <taxon>Bacteria</taxon>
        <taxon>Bacillati</taxon>
        <taxon>Actinomycetota</taxon>
        <taxon>Actinomycetes</taxon>
        <taxon>Mycobacteriales</taxon>
        <taxon>Mycobacteriaceae</taxon>
        <taxon>Mycobacterium</taxon>
        <taxon>Mycobacterium tuberculosis complex</taxon>
    </lineage>
</organism>
<feature type="chain" id="PRO_0000103988" description="Uncharacterized protein Mb2263c">
    <location>
        <begin position="1"/>
        <end position="158"/>
    </location>
</feature>
<name>Y2263_MYCBO</name>
<reference key="1">
    <citation type="journal article" date="2003" name="Proc. Natl. Acad. Sci. U.S.A.">
        <title>The complete genome sequence of Mycobacterium bovis.</title>
        <authorList>
            <person name="Garnier T."/>
            <person name="Eiglmeier K."/>
            <person name="Camus J.-C."/>
            <person name="Medina N."/>
            <person name="Mansoor H."/>
            <person name="Pryor M."/>
            <person name="Duthoy S."/>
            <person name="Grondin S."/>
            <person name="Lacroix C."/>
            <person name="Monsempe C."/>
            <person name="Simon S."/>
            <person name="Harris B."/>
            <person name="Atkin R."/>
            <person name="Doggett J."/>
            <person name="Mayes R."/>
            <person name="Keating L."/>
            <person name="Wheeler P.R."/>
            <person name="Parkhill J."/>
            <person name="Barrell B.G."/>
            <person name="Cole S.T."/>
            <person name="Gordon S.V."/>
            <person name="Hewinson R.G."/>
        </authorList>
    </citation>
    <scope>NUCLEOTIDE SEQUENCE [LARGE SCALE GENOMIC DNA]</scope>
    <source>
        <strain>ATCC BAA-935 / AF2122/97</strain>
    </source>
</reference>
<reference key="2">
    <citation type="journal article" date="2017" name="Genome Announc.">
        <title>Updated reference genome sequence and annotation of Mycobacterium bovis AF2122/97.</title>
        <authorList>
            <person name="Malone K.M."/>
            <person name="Farrell D."/>
            <person name="Stuber T.P."/>
            <person name="Schubert O.T."/>
            <person name="Aebersold R."/>
            <person name="Robbe-Austerman S."/>
            <person name="Gordon S.V."/>
        </authorList>
    </citation>
    <scope>NUCLEOTIDE SEQUENCE [LARGE SCALE GENOMIC DNA]</scope>
    <scope>GENOME REANNOTATION</scope>
    <source>
        <strain>ATCC BAA-935 / AF2122/97</strain>
    </source>
</reference>
<gene>
    <name type="ordered locus">BQ2027_MB2263C</name>
</gene>
<dbReference type="EMBL" id="LT708304">
    <property type="protein sequence ID" value="SIU00874.1"/>
    <property type="molecule type" value="Genomic_DNA"/>
</dbReference>
<dbReference type="RefSeq" id="NP_855912.1">
    <property type="nucleotide sequence ID" value="NC_002945.3"/>
</dbReference>
<dbReference type="KEGG" id="mbo:BQ2027_MB2263C"/>
<dbReference type="PATRIC" id="fig|233413.5.peg.2484"/>
<dbReference type="Proteomes" id="UP000001419">
    <property type="component" value="Chromosome"/>
</dbReference>
<dbReference type="InterPro" id="IPR021412">
    <property type="entry name" value="DUF3052"/>
</dbReference>
<dbReference type="Pfam" id="PF11253">
    <property type="entry name" value="DUF3052"/>
    <property type="match status" value="1"/>
</dbReference>
<accession>P64960</accession>
<accession>A0A1R3Y2S0</accession>
<accession>Q10521</accession>
<accession>X2BK67</accession>
<proteinExistence type="predicted"/>
<protein>
    <recommendedName>
        <fullName>Uncharacterized protein Mb2263c</fullName>
    </recommendedName>
</protein>
<sequence>MPIATVCTWPAETEGGSTVVAADHASNYARKLGIQRDQLIQEWGWDEDTDDDIRAAIEEACGGELLDEDTDEVIDVVLLWWRDGDGDLVDTLMDAIGPLAEDGVIWVVTPKTGQPGHVLPAEIAEAAPTAGLMPTSSVNLGNWSASRLVQPKSRAGKR</sequence>